<organism>
    <name type="scientific">Escherichia coli O6:H1 (strain CFT073 / ATCC 700928 / UPEC)</name>
    <dbReference type="NCBI Taxonomy" id="199310"/>
    <lineage>
        <taxon>Bacteria</taxon>
        <taxon>Pseudomonadati</taxon>
        <taxon>Pseudomonadota</taxon>
        <taxon>Gammaproteobacteria</taxon>
        <taxon>Enterobacterales</taxon>
        <taxon>Enterobacteriaceae</taxon>
        <taxon>Escherichia</taxon>
    </lineage>
</organism>
<protein>
    <recommendedName>
        <fullName evidence="2">1-deoxy-D-xylulose-5-phosphate synthase</fullName>
        <ecNumber evidence="2">2.2.1.7</ecNumber>
    </recommendedName>
    <alternativeName>
        <fullName evidence="2">1-deoxyxylulose-5-phosphate synthase</fullName>
        <shortName evidence="2">DXP synthase</shortName>
        <shortName evidence="2">DXPS</shortName>
    </alternativeName>
</protein>
<feature type="initiator methionine" description="Removed" evidence="1">
    <location>
        <position position="1"/>
    </location>
</feature>
<feature type="chain" id="PRO_0000189112" description="1-deoxy-D-xylulose-5-phosphate synthase">
    <location>
        <begin position="2"/>
        <end position="620"/>
    </location>
</feature>
<feature type="binding site" evidence="2">
    <location>
        <position position="80"/>
    </location>
    <ligand>
        <name>thiamine diphosphate</name>
        <dbReference type="ChEBI" id="CHEBI:58937"/>
    </ligand>
</feature>
<feature type="binding site" evidence="2">
    <location>
        <begin position="121"/>
        <end position="123"/>
    </location>
    <ligand>
        <name>thiamine diphosphate</name>
        <dbReference type="ChEBI" id="CHEBI:58937"/>
    </ligand>
</feature>
<feature type="binding site" evidence="2">
    <location>
        <position position="152"/>
    </location>
    <ligand>
        <name>Mg(2+)</name>
        <dbReference type="ChEBI" id="CHEBI:18420"/>
    </ligand>
</feature>
<feature type="binding site" evidence="2">
    <location>
        <begin position="153"/>
        <end position="154"/>
    </location>
    <ligand>
        <name>thiamine diphosphate</name>
        <dbReference type="ChEBI" id="CHEBI:58937"/>
    </ligand>
</feature>
<feature type="binding site" evidence="2">
    <location>
        <position position="181"/>
    </location>
    <ligand>
        <name>Mg(2+)</name>
        <dbReference type="ChEBI" id="CHEBI:18420"/>
    </ligand>
</feature>
<feature type="binding site" evidence="2">
    <location>
        <position position="181"/>
    </location>
    <ligand>
        <name>thiamine diphosphate</name>
        <dbReference type="ChEBI" id="CHEBI:58937"/>
    </ligand>
</feature>
<feature type="binding site" evidence="2">
    <location>
        <position position="288"/>
    </location>
    <ligand>
        <name>thiamine diphosphate</name>
        <dbReference type="ChEBI" id="CHEBI:58937"/>
    </ligand>
</feature>
<feature type="binding site" evidence="2">
    <location>
        <position position="370"/>
    </location>
    <ligand>
        <name>thiamine diphosphate</name>
        <dbReference type="ChEBI" id="CHEBI:58937"/>
    </ligand>
</feature>
<gene>
    <name evidence="2" type="primary">dxs</name>
    <name type="ordered locus">c0531</name>
</gene>
<reference key="1">
    <citation type="journal article" date="2002" name="Proc. Natl. Acad. Sci. U.S.A.">
        <title>Extensive mosaic structure revealed by the complete genome sequence of uropathogenic Escherichia coli.</title>
        <authorList>
            <person name="Welch R.A."/>
            <person name="Burland V."/>
            <person name="Plunkett G. III"/>
            <person name="Redford P."/>
            <person name="Roesch P."/>
            <person name="Rasko D."/>
            <person name="Buckles E.L."/>
            <person name="Liou S.-R."/>
            <person name="Boutin A."/>
            <person name="Hackett J."/>
            <person name="Stroud D."/>
            <person name="Mayhew G.F."/>
            <person name="Rose D.J."/>
            <person name="Zhou S."/>
            <person name="Schwartz D.C."/>
            <person name="Perna N.T."/>
            <person name="Mobley H.L.T."/>
            <person name="Donnenberg M.S."/>
            <person name="Blattner F.R."/>
        </authorList>
    </citation>
    <scope>NUCLEOTIDE SEQUENCE [LARGE SCALE GENOMIC DNA]</scope>
    <source>
        <strain>CFT073 / ATCC 700928 / UPEC</strain>
    </source>
</reference>
<dbReference type="EC" id="2.2.1.7" evidence="2"/>
<dbReference type="EMBL" id="AE014075">
    <property type="protein sequence ID" value="AAN79009.1"/>
    <property type="molecule type" value="Genomic_DNA"/>
</dbReference>
<dbReference type="RefSeq" id="WP_000006816.1">
    <property type="nucleotide sequence ID" value="NZ_CP051263.1"/>
</dbReference>
<dbReference type="SMR" id="Q8FKB9"/>
<dbReference type="STRING" id="199310.c0531"/>
<dbReference type="KEGG" id="ecc:c0531"/>
<dbReference type="eggNOG" id="COG1154">
    <property type="taxonomic scope" value="Bacteria"/>
</dbReference>
<dbReference type="HOGENOM" id="CLU_009227_1_4_6"/>
<dbReference type="BioCyc" id="ECOL199310:C0531-MONOMER"/>
<dbReference type="UniPathway" id="UPA00064">
    <property type="reaction ID" value="UER00091"/>
</dbReference>
<dbReference type="Proteomes" id="UP000001410">
    <property type="component" value="Chromosome"/>
</dbReference>
<dbReference type="GO" id="GO:0005829">
    <property type="term" value="C:cytosol"/>
    <property type="evidence" value="ECO:0007669"/>
    <property type="project" value="TreeGrafter"/>
</dbReference>
<dbReference type="GO" id="GO:0008661">
    <property type="term" value="F:1-deoxy-D-xylulose-5-phosphate synthase activity"/>
    <property type="evidence" value="ECO:0007669"/>
    <property type="project" value="UniProtKB-UniRule"/>
</dbReference>
<dbReference type="GO" id="GO:0000287">
    <property type="term" value="F:magnesium ion binding"/>
    <property type="evidence" value="ECO:0007669"/>
    <property type="project" value="UniProtKB-UniRule"/>
</dbReference>
<dbReference type="GO" id="GO:0030976">
    <property type="term" value="F:thiamine pyrophosphate binding"/>
    <property type="evidence" value="ECO:0007669"/>
    <property type="project" value="UniProtKB-UniRule"/>
</dbReference>
<dbReference type="GO" id="GO:0052865">
    <property type="term" value="P:1-deoxy-D-xylulose 5-phosphate biosynthetic process"/>
    <property type="evidence" value="ECO:0007669"/>
    <property type="project" value="UniProtKB-UniPathway"/>
</dbReference>
<dbReference type="GO" id="GO:0019288">
    <property type="term" value="P:isopentenyl diphosphate biosynthetic process, methylerythritol 4-phosphate pathway"/>
    <property type="evidence" value="ECO:0007669"/>
    <property type="project" value="TreeGrafter"/>
</dbReference>
<dbReference type="GO" id="GO:0016114">
    <property type="term" value="P:terpenoid biosynthetic process"/>
    <property type="evidence" value="ECO:0007669"/>
    <property type="project" value="UniProtKB-UniRule"/>
</dbReference>
<dbReference type="GO" id="GO:0009228">
    <property type="term" value="P:thiamine biosynthetic process"/>
    <property type="evidence" value="ECO:0007669"/>
    <property type="project" value="UniProtKB-UniRule"/>
</dbReference>
<dbReference type="CDD" id="cd02007">
    <property type="entry name" value="TPP_DXS"/>
    <property type="match status" value="1"/>
</dbReference>
<dbReference type="CDD" id="cd07033">
    <property type="entry name" value="TPP_PYR_DXS_TK_like"/>
    <property type="match status" value="1"/>
</dbReference>
<dbReference type="FunFam" id="3.40.50.920:FF:000002">
    <property type="entry name" value="1-deoxy-D-xylulose-5-phosphate synthase"/>
    <property type="match status" value="1"/>
</dbReference>
<dbReference type="FunFam" id="3.40.50.970:FF:000005">
    <property type="entry name" value="1-deoxy-D-xylulose-5-phosphate synthase"/>
    <property type="match status" value="1"/>
</dbReference>
<dbReference type="Gene3D" id="3.40.50.920">
    <property type="match status" value="1"/>
</dbReference>
<dbReference type="Gene3D" id="3.40.50.970">
    <property type="match status" value="2"/>
</dbReference>
<dbReference type="HAMAP" id="MF_00315">
    <property type="entry name" value="DXP_synth"/>
    <property type="match status" value="1"/>
</dbReference>
<dbReference type="InterPro" id="IPR005477">
    <property type="entry name" value="Dxylulose-5-P_synthase"/>
</dbReference>
<dbReference type="InterPro" id="IPR029061">
    <property type="entry name" value="THDP-binding"/>
</dbReference>
<dbReference type="InterPro" id="IPR009014">
    <property type="entry name" value="Transketo_C/PFOR_II"/>
</dbReference>
<dbReference type="InterPro" id="IPR005475">
    <property type="entry name" value="Transketolase-like_Pyr-bd"/>
</dbReference>
<dbReference type="InterPro" id="IPR020826">
    <property type="entry name" value="Transketolase_BS"/>
</dbReference>
<dbReference type="InterPro" id="IPR033248">
    <property type="entry name" value="Transketolase_C"/>
</dbReference>
<dbReference type="InterPro" id="IPR049557">
    <property type="entry name" value="Transketolase_CS"/>
</dbReference>
<dbReference type="NCBIfam" id="TIGR00204">
    <property type="entry name" value="dxs"/>
    <property type="match status" value="1"/>
</dbReference>
<dbReference type="NCBIfam" id="NF003933">
    <property type="entry name" value="PRK05444.2-2"/>
    <property type="match status" value="1"/>
</dbReference>
<dbReference type="PANTHER" id="PTHR43322">
    <property type="entry name" value="1-D-DEOXYXYLULOSE 5-PHOSPHATE SYNTHASE-RELATED"/>
    <property type="match status" value="1"/>
</dbReference>
<dbReference type="PANTHER" id="PTHR43322:SF5">
    <property type="entry name" value="1-DEOXY-D-XYLULOSE-5-PHOSPHATE SYNTHASE, CHLOROPLASTIC"/>
    <property type="match status" value="1"/>
</dbReference>
<dbReference type="Pfam" id="PF13292">
    <property type="entry name" value="DXP_synthase_N"/>
    <property type="match status" value="1"/>
</dbReference>
<dbReference type="Pfam" id="PF02779">
    <property type="entry name" value="Transket_pyr"/>
    <property type="match status" value="1"/>
</dbReference>
<dbReference type="Pfam" id="PF02780">
    <property type="entry name" value="Transketolase_C"/>
    <property type="match status" value="1"/>
</dbReference>
<dbReference type="SMART" id="SM00861">
    <property type="entry name" value="Transket_pyr"/>
    <property type="match status" value="1"/>
</dbReference>
<dbReference type="SUPFAM" id="SSF52518">
    <property type="entry name" value="Thiamin diphosphate-binding fold (THDP-binding)"/>
    <property type="match status" value="2"/>
</dbReference>
<dbReference type="SUPFAM" id="SSF52922">
    <property type="entry name" value="TK C-terminal domain-like"/>
    <property type="match status" value="1"/>
</dbReference>
<dbReference type="PROSITE" id="PS00801">
    <property type="entry name" value="TRANSKETOLASE_1"/>
    <property type="match status" value="1"/>
</dbReference>
<dbReference type="PROSITE" id="PS00802">
    <property type="entry name" value="TRANSKETOLASE_2"/>
    <property type="match status" value="1"/>
</dbReference>
<accession>Q8FKB9</accession>
<name>DXS_ECOL6</name>
<keyword id="KW-0414">Isoprene biosynthesis</keyword>
<keyword id="KW-0460">Magnesium</keyword>
<keyword id="KW-0479">Metal-binding</keyword>
<keyword id="KW-1185">Reference proteome</keyword>
<keyword id="KW-0784">Thiamine biosynthesis</keyword>
<keyword id="KW-0786">Thiamine pyrophosphate</keyword>
<keyword id="KW-0808">Transferase</keyword>
<proteinExistence type="inferred from homology"/>
<sequence>MSFDIAKYPTLALVDSTQELRLLPKESLPKLCDELRRYLLDSVSRSSGHFASGLGTVELTVALHYVYNTPFDQLIWDVGHQAYPHKILTGRRDKIGTIRQKGGLHPFPWRGESEYDVLSVGHSSTSISAGIGIAVAAEKEGKNRRTVCVIGDGAITAGMAFEAMNHAGDIRPDMLVVLNDNEMSISENVGALNNHLAQLLSGKLYSSLREGGKKVFSGVPPIKELLKRTEEHIKGMVVPGTLFEELGFNYIGPVDGHDVLGLITTLKNMRDLKGPQFLHIMTKKGRGYEPAEKDPITFHAVPKFDPSSGCLPKSSGGLPSYSKIFGDWLCETAAKDNKLMAITPAMREGSGMVEFSRKFPDRYFDVAIAEQHAVTFAAGLAIGGYKPIVAIYSTFLQRAYDQVLHDVAIQKLPVLFAIDRAGIVGADGQTHQGAFDLSYLRCIPEMVIMTPSDENECRQMLYTGYHYNDGPSAVRYPRGNAVGVELTPLEKLPIGKGIVKRRGEKLAILNFGTLMPEAAKVAESLNATLVDMRFVKPLDEALILEMAASHEALVTVEENAIMGGAGSGVNEVLMAHRKPVPVLNIGLPDFFIPQGTQEEMRAELGLDATGMEAKIKAWLA</sequence>
<comment type="function">
    <text evidence="2">Catalyzes the acyloin condensation reaction between C atoms 2 and 3 of pyruvate and glyceraldehyde 3-phosphate to yield 1-deoxy-D-xylulose-5-phosphate (DXP).</text>
</comment>
<comment type="catalytic activity">
    <reaction evidence="2">
        <text>D-glyceraldehyde 3-phosphate + pyruvate + H(+) = 1-deoxy-D-xylulose 5-phosphate + CO2</text>
        <dbReference type="Rhea" id="RHEA:12605"/>
        <dbReference type="ChEBI" id="CHEBI:15361"/>
        <dbReference type="ChEBI" id="CHEBI:15378"/>
        <dbReference type="ChEBI" id="CHEBI:16526"/>
        <dbReference type="ChEBI" id="CHEBI:57792"/>
        <dbReference type="ChEBI" id="CHEBI:59776"/>
        <dbReference type="EC" id="2.2.1.7"/>
    </reaction>
</comment>
<comment type="cofactor">
    <cofactor evidence="2">
        <name>Mg(2+)</name>
        <dbReference type="ChEBI" id="CHEBI:18420"/>
    </cofactor>
    <text evidence="2">Binds 1 Mg(2+) ion per subunit.</text>
</comment>
<comment type="cofactor">
    <cofactor evidence="2">
        <name>thiamine diphosphate</name>
        <dbReference type="ChEBI" id="CHEBI:58937"/>
    </cofactor>
    <text evidence="2">Binds 1 thiamine pyrophosphate per subunit.</text>
</comment>
<comment type="pathway">
    <text evidence="2">Metabolic intermediate biosynthesis; 1-deoxy-D-xylulose 5-phosphate biosynthesis; 1-deoxy-D-xylulose 5-phosphate from D-glyceraldehyde 3-phosphate and pyruvate: step 1/1.</text>
</comment>
<comment type="subunit">
    <text evidence="2">Homodimer.</text>
</comment>
<comment type="similarity">
    <text evidence="2">Belongs to the transketolase family. DXPS subfamily.</text>
</comment>
<evidence type="ECO:0000250" key="1"/>
<evidence type="ECO:0000255" key="2">
    <source>
        <dbReference type="HAMAP-Rule" id="MF_00315"/>
    </source>
</evidence>